<dbReference type="EMBL" id="CP000034">
    <property type="protein sequence ID" value="ABB60253.1"/>
    <property type="molecule type" value="Genomic_DNA"/>
</dbReference>
<dbReference type="RefSeq" id="WP_000516135.1">
    <property type="nucleotide sequence ID" value="NC_007606.1"/>
</dbReference>
<dbReference type="RefSeq" id="YP_401741.1">
    <property type="nucleotide sequence ID" value="NC_007606.1"/>
</dbReference>
<dbReference type="SMR" id="Q32KA5"/>
<dbReference type="STRING" id="300267.SDY_0013"/>
<dbReference type="EnsemblBacteria" id="ABB60253">
    <property type="protein sequence ID" value="ABB60253"/>
    <property type="gene ID" value="SDY_0013"/>
</dbReference>
<dbReference type="GeneID" id="93777429"/>
<dbReference type="KEGG" id="sdy:SDY_0013"/>
<dbReference type="PATRIC" id="fig|300267.13.peg.13"/>
<dbReference type="HOGENOM" id="CLU_005965_2_1_6"/>
<dbReference type="Proteomes" id="UP000002716">
    <property type="component" value="Chromosome"/>
</dbReference>
<dbReference type="GO" id="GO:0005524">
    <property type="term" value="F:ATP binding"/>
    <property type="evidence" value="ECO:0007669"/>
    <property type="project" value="UniProtKB-UniRule"/>
</dbReference>
<dbReference type="GO" id="GO:0140662">
    <property type="term" value="F:ATP-dependent protein folding chaperone"/>
    <property type="evidence" value="ECO:0007669"/>
    <property type="project" value="InterPro"/>
</dbReference>
<dbReference type="GO" id="GO:0051082">
    <property type="term" value="F:unfolded protein binding"/>
    <property type="evidence" value="ECO:0007669"/>
    <property type="project" value="InterPro"/>
</dbReference>
<dbReference type="CDD" id="cd10234">
    <property type="entry name" value="ASKHA_NBD_HSP70_DnaK-like"/>
    <property type="match status" value="1"/>
</dbReference>
<dbReference type="FunFam" id="2.60.34.10:FF:000014">
    <property type="entry name" value="Chaperone protein DnaK HSP70"/>
    <property type="match status" value="1"/>
</dbReference>
<dbReference type="FunFam" id="1.20.1270.10:FF:000001">
    <property type="entry name" value="Molecular chaperone DnaK"/>
    <property type="match status" value="1"/>
</dbReference>
<dbReference type="FunFam" id="3.30.420.40:FF:000004">
    <property type="entry name" value="Molecular chaperone DnaK"/>
    <property type="match status" value="1"/>
</dbReference>
<dbReference type="FunFam" id="3.90.640.10:FF:000003">
    <property type="entry name" value="Molecular chaperone DnaK"/>
    <property type="match status" value="1"/>
</dbReference>
<dbReference type="Gene3D" id="1.20.1270.10">
    <property type="match status" value="1"/>
</dbReference>
<dbReference type="Gene3D" id="3.30.420.40">
    <property type="match status" value="2"/>
</dbReference>
<dbReference type="Gene3D" id="3.90.640.10">
    <property type="entry name" value="Actin, Chain A, domain 4"/>
    <property type="match status" value="1"/>
</dbReference>
<dbReference type="Gene3D" id="2.60.34.10">
    <property type="entry name" value="Substrate Binding Domain Of DNAk, Chain A, domain 1"/>
    <property type="match status" value="1"/>
</dbReference>
<dbReference type="HAMAP" id="MF_00332">
    <property type="entry name" value="DnaK"/>
    <property type="match status" value="1"/>
</dbReference>
<dbReference type="InterPro" id="IPR043129">
    <property type="entry name" value="ATPase_NBD"/>
</dbReference>
<dbReference type="InterPro" id="IPR012725">
    <property type="entry name" value="Chaperone_DnaK"/>
</dbReference>
<dbReference type="InterPro" id="IPR018181">
    <property type="entry name" value="Heat_shock_70_CS"/>
</dbReference>
<dbReference type="InterPro" id="IPR029048">
    <property type="entry name" value="HSP70_C_sf"/>
</dbReference>
<dbReference type="InterPro" id="IPR029047">
    <property type="entry name" value="HSP70_peptide-bd_sf"/>
</dbReference>
<dbReference type="InterPro" id="IPR013126">
    <property type="entry name" value="Hsp_70_fam"/>
</dbReference>
<dbReference type="NCBIfam" id="NF001413">
    <property type="entry name" value="PRK00290.1"/>
    <property type="match status" value="1"/>
</dbReference>
<dbReference type="NCBIfam" id="NF003520">
    <property type="entry name" value="PRK05183.1"/>
    <property type="match status" value="1"/>
</dbReference>
<dbReference type="NCBIfam" id="TIGR02350">
    <property type="entry name" value="prok_dnaK"/>
    <property type="match status" value="1"/>
</dbReference>
<dbReference type="PANTHER" id="PTHR19375">
    <property type="entry name" value="HEAT SHOCK PROTEIN 70KDA"/>
    <property type="match status" value="1"/>
</dbReference>
<dbReference type="Pfam" id="PF00012">
    <property type="entry name" value="HSP70"/>
    <property type="match status" value="1"/>
</dbReference>
<dbReference type="PRINTS" id="PR00301">
    <property type="entry name" value="HEATSHOCK70"/>
</dbReference>
<dbReference type="SUPFAM" id="SSF53067">
    <property type="entry name" value="Actin-like ATPase domain"/>
    <property type="match status" value="2"/>
</dbReference>
<dbReference type="SUPFAM" id="SSF100934">
    <property type="entry name" value="Heat shock protein 70kD (HSP70), C-terminal subdomain"/>
    <property type="match status" value="1"/>
</dbReference>
<dbReference type="SUPFAM" id="SSF100920">
    <property type="entry name" value="Heat shock protein 70kD (HSP70), peptide-binding domain"/>
    <property type="match status" value="1"/>
</dbReference>
<dbReference type="PROSITE" id="PS00297">
    <property type="entry name" value="HSP70_1"/>
    <property type="match status" value="1"/>
</dbReference>
<dbReference type="PROSITE" id="PS00329">
    <property type="entry name" value="HSP70_2"/>
    <property type="match status" value="1"/>
</dbReference>
<dbReference type="PROSITE" id="PS01036">
    <property type="entry name" value="HSP70_3"/>
    <property type="match status" value="1"/>
</dbReference>
<evidence type="ECO:0000255" key="1">
    <source>
        <dbReference type="HAMAP-Rule" id="MF_00332"/>
    </source>
</evidence>
<evidence type="ECO:0000256" key="2">
    <source>
        <dbReference type="SAM" id="MobiDB-lite"/>
    </source>
</evidence>
<proteinExistence type="inferred from homology"/>
<comment type="function">
    <text evidence="1">Acts as a chaperone.</text>
</comment>
<comment type="induction">
    <text evidence="1">By stress conditions e.g. heat shock.</text>
</comment>
<comment type="similarity">
    <text evidence="1">Belongs to the heat shock protein 70 family.</text>
</comment>
<sequence>MGKIIGIDLGTTNSCVAIMDGTTPRVLENAEGDRTTPSIIAYTQDGETLVGQPAKRQAVTNPQNTLFAIKRLIGRRFQDEEVQRDVSIMPFKIIAADNGDAWVEVKGQKMAPPQISAEVLKKMKKTAEDYLGEPVTEAVITVPAYFNDAQRQATKDAGRIAGLEVKRIINEPTAAALAYGLDKGTGNRTIAVYDLGGGTFDISIIEIDEVDGEKTFEVLATNGDTHLGGEDFDSRLINYLVEEFKKDQGIDLRNDPLAMQRLKEAAEKAKIELSSAQQTDVNLPYITADATGPKHMNIKVTRAKLESLVEDLVNRSIEPLKVALQDAGLSVSDIDDVILVGGQTRMPMVQKKVAEFFGKEPRKDVNPDEAVAIGAAVQGGVLTGDVKDVLLLDVTPLSLGIETMGGVMTTLIAKNTTIPTKHSQVFSTAEDNQSAVTIHVLQGERKRAADNKSLGQFNLDGINPAPRGMPQIEVTFDIDADGILHVSAKDKNSGKEQKITIKASSGLNEDEIQKMVRDAEANAEADRKFEELVQTRNQGDHLLHSTRKQVEEAGDKLPADDKTAIESALTALETALKGEDKAAIEAKMQELAQVSQKLMEIAQQQHAQQQTAGADASANNAKDDDVVDAEFEEVKDKK</sequence>
<reference key="1">
    <citation type="journal article" date="2005" name="Nucleic Acids Res.">
        <title>Genome dynamics and diversity of Shigella species, the etiologic agents of bacillary dysentery.</title>
        <authorList>
            <person name="Yang F."/>
            <person name="Yang J."/>
            <person name="Zhang X."/>
            <person name="Chen L."/>
            <person name="Jiang Y."/>
            <person name="Yan Y."/>
            <person name="Tang X."/>
            <person name="Wang J."/>
            <person name="Xiong Z."/>
            <person name="Dong J."/>
            <person name="Xue Y."/>
            <person name="Zhu Y."/>
            <person name="Xu X."/>
            <person name="Sun L."/>
            <person name="Chen S."/>
            <person name="Nie H."/>
            <person name="Peng J."/>
            <person name="Xu J."/>
            <person name="Wang Y."/>
            <person name="Yuan Z."/>
            <person name="Wen Y."/>
            <person name="Yao Z."/>
            <person name="Shen Y."/>
            <person name="Qiang B."/>
            <person name="Hou Y."/>
            <person name="Yu J."/>
            <person name="Jin Q."/>
        </authorList>
    </citation>
    <scope>NUCLEOTIDE SEQUENCE [LARGE SCALE GENOMIC DNA]</scope>
    <source>
        <strain>Sd197</strain>
    </source>
</reference>
<accession>Q32KA5</accession>
<name>DNAK_SHIDS</name>
<gene>
    <name evidence="1" type="primary">dnaK</name>
    <name type="ordered locus">SDY_0013</name>
</gene>
<feature type="chain" id="PRO_0000226009" description="Chaperone protein DnaK">
    <location>
        <begin position="1"/>
        <end position="638"/>
    </location>
</feature>
<feature type="region of interest" description="Disordered" evidence="2">
    <location>
        <begin position="602"/>
        <end position="638"/>
    </location>
</feature>
<feature type="compositionally biased region" description="Low complexity" evidence="2">
    <location>
        <begin position="602"/>
        <end position="620"/>
    </location>
</feature>
<feature type="modified residue" description="N6-acetyllysine" evidence="1">
    <location>
        <position position="109"/>
    </location>
</feature>
<feature type="modified residue" description="Phosphothreonine; by autocatalysis" evidence="1">
    <location>
        <position position="199"/>
    </location>
</feature>
<feature type="modified residue" description="N6-acetyllysine" evidence="1">
    <location>
        <position position="245"/>
    </location>
</feature>
<feature type="modified residue" description="N6-acetyllysine" evidence="1">
    <location>
        <position position="304"/>
    </location>
</feature>
<feature type="modified residue" description="N6-acetyllysine" evidence="1">
    <location>
        <position position="421"/>
    </location>
</feature>
<feature type="modified residue" description="N6-acetyllysine" evidence="1">
    <location>
        <position position="556"/>
    </location>
</feature>
<protein>
    <recommendedName>
        <fullName evidence="1">Chaperone protein DnaK</fullName>
    </recommendedName>
    <alternativeName>
        <fullName evidence="1">HSP70</fullName>
    </alternativeName>
    <alternativeName>
        <fullName evidence="1">Heat shock 70 kDa protein</fullName>
    </alternativeName>
    <alternativeName>
        <fullName evidence="1">Heat shock protein 70</fullName>
    </alternativeName>
</protein>
<keyword id="KW-0007">Acetylation</keyword>
<keyword id="KW-0067">ATP-binding</keyword>
<keyword id="KW-0143">Chaperone</keyword>
<keyword id="KW-0547">Nucleotide-binding</keyword>
<keyword id="KW-0597">Phosphoprotein</keyword>
<keyword id="KW-1185">Reference proteome</keyword>
<keyword id="KW-0346">Stress response</keyword>
<organism>
    <name type="scientific">Shigella dysenteriae serotype 1 (strain Sd197)</name>
    <dbReference type="NCBI Taxonomy" id="300267"/>
    <lineage>
        <taxon>Bacteria</taxon>
        <taxon>Pseudomonadati</taxon>
        <taxon>Pseudomonadota</taxon>
        <taxon>Gammaproteobacteria</taxon>
        <taxon>Enterobacterales</taxon>
        <taxon>Enterobacteriaceae</taxon>
        <taxon>Shigella</taxon>
    </lineage>
</organism>